<keyword id="KW-0488">Methylation</keyword>
<keyword id="KW-1185">Reference proteome</keyword>
<keyword id="KW-0687">Ribonucleoprotein</keyword>
<keyword id="KW-0689">Ribosomal protein</keyword>
<keyword id="KW-0694">RNA-binding</keyword>
<keyword id="KW-0699">rRNA-binding</keyword>
<name>RL11A_BACCR</name>
<reference key="1">
    <citation type="journal article" date="2003" name="Nature">
        <title>Genome sequence of Bacillus cereus and comparative analysis with Bacillus anthracis.</title>
        <authorList>
            <person name="Ivanova N."/>
            <person name="Sorokin A."/>
            <person name="Anderson I."/>
            <person name="Galleron N."/>
            <person name="Candelon B."/>
            <person name="Kapatral V."/>
            <person name="Bhattacharyya A."/>
            <person name="Reznik G."/>
            <person name="Mikhailova N."/>
            <person name="Lapidus A."/>
            <person name="Chu L."/>
            <person name="Mazur M."/>
            <person name="Goltsman E."/>
            <person name="Larsen N."/>
            <person name="D'Souza M."/>
            <person name="Walunas T."/>
            <person name="Grechkin Y."/>
            <person name="Pusch G."/>
            <person name="Haselkorn R."/>
            <person name="Fonstein M."/>
            <person name="Ehrlich S.D."/>
            <person name="Overbeek R."/>
            <person name="Kyrpides N.C."/>
        </authorList>
    </citation>
    <scope>NUCLEOTIDE SEQUENCE [LARGE SCALE GENOMIC DNA]</scope>
    <source>
        <strain>ATCC 14579 / DSM 31 / CCUG 7414 / JCM 2152 / NBRC 15305 / NCIMB 9373 / NCTC 2599 / NRRL B-3711</strain>
    </source>
</reference>
<feature type="chain" id="PRO_0000104237" description="Large ribosomal subunit protein uL11A">
    <location>
        <begin position="1"/>
        <end position="141"/>
    </location>
</feature>
<gene>
    <name evidence="1" type="primary">rplK1</name>
    <name type="synonym">rplK</name>
    <name type="ordered locus">BC_0117</name>
</gene>
<organism>
    <name type="scientific">Bacillus cereus (strain ATCC 14579 / DSM 31 / CCUG 7414 / JCM 2152 / NBRC 15305 / NCIMB 9373 / NCTC 2599 / NRRL B-3711)</name>
    <dbReference type="NCBI Taxonomy" id="226900"/>
    <lineage>
        <taxon>Bacteria</taxon>
        <taxon>Bacillati</taxon>
        <taxon>Bacillota</taxon>
        <taxon>Bacilli</taxon>
        <taxon>Bacillales</taxon>
        <taxon>Bacillaceae</taxon>
        <taxon>Bacillus</taxon>
        <taxon>Bacillus cereus group</taxon>
    </lineage>
</organism>
<accession>Q81J53</accession>
<proteinExistence type="inferred from homology"/>
<evidence type="ECO:0000255" key="1">
    <source>
        <dbReference type="HAMAP-Rule" id="MF_00736"/>
    </source>
</evidence>
<evidence type="ECO:0000305" key="2"/>
<sequence length="141" mass="14918">MAKKVIKMVKLQIPAGKANPAPPVGPALGQAGVNIMGFCKEFNARTADQAGLIIPVEITVFEDRSFTFITKTPPAAVLLKKAAGIESGSGEPNRNKVATVKRDKVREIAETKMPDLNAASVEAAMRMVEGAARSMGIVIED</sequence>
<comment type="function">
    <text evidence="1">Forms part of the ribosomal stalk which helps the ribosome interact with GTP-bound translation factors.</text>
</comment>
<comment type="subunit">
    <text evidence="1">Part of the ribosomal stalk of the 50S ribosomal subunit. Interacts with L10 and the large rRNA to form the base of the stalk. L10 forms an elongated spine to which L12 dimers bind in a sequential fashion forming a multimeric L10(L12)X complex.</text>
</comment>
<comment type="PTM">
    <text evidence="1">One or more lysine residues are methylated.</text>
</comment>
<comment type="similarity">
    <text evidence="1">Belongs to the universal ribosomal protein uL11 family.</text>
</comment>
<protein>
    <recommendedName>
        <fullName evidence="1">Large ribosomal subunit protein uL11A</fullName>
    </recommendedName>
    <alternativeName>
        <fullName evidence="2">50S ribosomal protein L11-1</fullName>
    </alternativeName>
</protein>
<dbReference type="EMBL" id="AE016877">
    <property type="protein sequence ID" value="AAP07199.1"/>
    <property type="molecule type" value="Genomic_DNA"/>
</dbReference>
<dbReference type="RefSeq" id="NP_829998.1">
    <property type="nucleotide sequence ID" value="NC_004722.1"/>
</dbReference>
<dbReference type="RefSeq" id="WP_001085871.1">
    <property type="nucleotide sequence ID" value="NC_004722.1"/>
</dbReference>
<dbReference type="SMR" id="Q81J53"/>
<dbReference type="STRING" id="226900.BC_0117"/>
<dbReference type="KEGG" id="bce:BC0117"/>
<dbReference type="PATRIC" id="fig|226900.8.peg.119"/>
<dbReference type="HOGENOM" id="CLU_074237_2_1_9"/>
<dbReference type="OrthoDB" id="9802408at2"/>
<dbReference type="Proteomes" id="UP000001417">
    <property type="component" value="Chromosome"/>
</dbReference>
<dbReference type="GO" id="GO:0022625">
    <property type="term" value="C:cytosolic large ribosomal subunit"/>
    <property type="evidence" value="ECO:0000318"/>
    <property type="project" value="GO_Central"/>
</dbReference>
<dbReference type="GO" id="GO:0070180">
    <property type="term" value="F:large ribosomal subunit rRNA binding"/>
    <property type="evidence" value="ECO:0000318"/>
    <property type="project" value="GO_Central"/>
</dbReference>
<dbReference type="GO" id="GO:0003735">
    <property type="term" value="F:structural constituent of ribosome"/>
    <property type="evidence" value="ECO:0000318"/>
    <property type="project" value="GO_Central"/>
</dbReference>
<dbReference type="GO" id="GO:0006412">
    <property type="term" value="P:translation"/>
    <property type="evidence" value="ECO:0000318"/>
    <property type="project" value="GO_Central"/>
</dbReference>
<dbReference type="CDD" id="cd00349">
    <property type="entry name" value="Ribosomal_L11"/>
    <property type="match status" value="1"/>
</dbReference>
<dbReference type="FunFam" id="1.10.10.250:FF:000001">
    <property type="entry name" value="50S ribosomal protein L11"/>
    <property type="match status" value="1"/>
</dbReference>
<dbReference type="FunFam" id="3.30.1550.10:FF:000001">
    <property type="entry name" value="50S ribosomal protein L11"/>
    <property type="match status" value="1"/>
</dbReference>
<dbReference type="Gene3D" id="1.10.10.250">
    <property type="entry name" value="Ribosomal protein L11, C-terminal domain"/>
    <property type="match status" value="1"/>
</dbReference>
<dbReference type="Gene3D" id="3.30.1550.10">
    <property type="entry name" value="Ribosomal protein L11/L12, N-terminal domain"/>
    <property type="match status" value="1"/>
</dbReference>
<dbReference type="HAMAP" id="MF_00736">
    <property type="entry name" value="Ribosomal_uL11"/>
    <property type="match status" value="1"/>
</dbReference>
<dbReference type="InterPro" id="IPR000911">
    <property type="entry name" value="Ribosomal_uL11"/>
</dbReference>
<dbReference type="InterPro" id="IPR006519">
    <property type="entry name" value="Ribosomal_uL11_bac-typ"/>
</dbReference>
<dbReference type="InterPro" id="IPR020783">
    <property type="entry name" value="Ribosomal_uL11_C"/>
</dbReference>
<dbReference type="InterPro" id="IPR036769">
    <property type="entry name" value="Ribosomal_uL11_C_sf"/>
</dbReference>
<dbReference type="InterPro" id="IPR020784">
    <property type="entry name" value="Ribosomal_uL11_N"/>
</dbReference>
<dbReference type="InterPro" id="IPR036796">
    <property type="entry name" value="Ribosomal_uL11_N_sf"/>
</dbReference>
<dbReference type="NCBIfam" id="TIGR01632">
    <property type="entry name" value="L11_bact"/>
    <property type="match status" value="1"/>
</dbReference>
<dbReference type="PANTHER" id="PTHR11661">
    <property type="entry name" value="60S RIBOSOMAL PROTEIN L12"/>
    <property type="match status" value="1"/>
</dbReference>
<dbReference type="PANTHER" id="PTHR11661:SF1">
    <property type="entry name" value="LARGE RIBOSOMAL SUBUNIT PROTEIN UL11M"/>
    <property type="match status" value="1"/>
</dbReference>
<dbReference type="Pfam" id="PF00298">
    <property type="entry name" value="Ribosomal_L11"/>
    <property type="match status" value="1"/>
</dbReference>
<dbReference type="Pfam" id="PF03946">
    <property type="entry name" value="Ribosomal_L11_N"/>
    <property type="match status" value="1"/>
</dbReference>
<dbReference type="SMART" id="SM00649">
    <property type="entry name" value="RL11"/>
    <property type="match status" value="1"/>
</dbReference>
<dbReference type="SUPFAM" id="SSF54747">
    <property type="entry name" value="Ribosomal L11/L12e N-terminal domain"/>
    <property type="match status" value="1"/>
</dbReference>
<dbReference type="SUPFAM" id="SSF46906">
    <property type="entry name" value="Ribosomal protein L11, C-terminal domain"/>
    <property type="match status" value="1"/>
</dbReference>